<accession>Q8HXX1</accession>
<gene>
    <name type="primary">MMUT</name>
    <name type="synonym">MUT</name>
    <name type="ORF">QnpA-10043</name>
</gene>
<feature type="transit peptide" description="Mitochondrion" evidence="3">
    <location>
        <begin position="1"/>
        <end position="32"/>
    </location>
</feature>
<feature type="chain" id="PRO_0000019294" description="Methylmalonyl-CoA mutase, mitochondrial">
    <location>
        <begin position="33"/>
        <end position="750"/>
    </location>
</feature>
<feature type="domain" description="B12-binding" evidence="4">
    <location>
        <begin position="614"/>
        <end position="746"/>
    </location>
</feature>
<feature type="binding site" evidence="2">
    <location>
        <position position="50"/>
    </location>
    <ligand>
        <name>malonyl-CoA</name>
        <dbReference type="ChEBI" id="CHEBI:57384"/>
    </ligand>
</feature>
<feature type="binding site" evidence="2">
    <location>
        <begin position="96"/>
        <end position="99"/>
    </location>
    <ligand>
        <name>malonyl-CoA</name>
        <dbReference type="ChEBI" id="CHEBI:57384"/>
    </ligand>
</feature>
<feature type="binding site" evidence="2">
    <location>
        <begin position="106"/>
        <end position="110"/>
    </location>
    <ligand>
        <name>malonyl-CoA</name>
        <dbReference type="ChEBI" id="CHEBI:57384"/>
    </ligand>
</feature>
<feature type="binding site" evidence="2">
    <location>
        <begin position="216"/>
        <end position="218"/>
    </location>
    <ligand>
        <name>malonyl-CoA</name>
        <dbReference type="ChEBI" id="CHEBI:57384"/>
    </ligand>
</feature>
<feature type="binding site" evidence="2">
    <location>
        <position position="228"/>
    </location>
    <ligand>
        <name>malonyl-CoA</name>
        <dbReference type="ChEBI" id="CHEBI:57384"/>
    </ligand>
</feature>
<feature type="binding site" evidence="2">
    <location>
        <position position="255"/>
    </location>
    <ligand>
        <name>malonyl-CoA</name>
        <dbReference type="ChEBI" id="CHEBI:57384"/>
    </ligand>
</feature>
<feature type="binding site" evidence="2">
    <location>
        <position position="265"/>
    </location>
    <ligand>
        <name>malonyl-CoA</name>
        <dbReference type="ChEBI" id="CHEBI:57384"/>
    </ligand>
</feature>
<feature type="binding site" evidence="2">
    <location>
        <begin position="304"/>
        <end position="306"/>
    </location>
    <ligand>
        <name>malonyl-CoA</name>
        <dbReference type="ChEBI" id="CHEBI:57384"/>
    </ligand>
</feature>
<feature type="binding site" description="axial binding residue" evidence="2">
    <location>
        <position position="627"/>
    </location>
    <ligand>
        <name>adenosylcob(III)alamin</name>
        <dbReference type="ChEBI" id="CHEBI:18408"/>
    </ligand>
    <ligandPart>
        <name>Co</name>
        <dbReference type="ChEBI" id="CHEBI:27638"/>
    </ligandPart>
</feature>
<feature type="modified residue" description="N6-acetyllysine" evidence="1">
    <location>
        <position position="89"/>
    </location>
</feature>
<feature type="modified residue" description="N6-acetyllysine" evidence="1">
    <location>
        <position position="212"/>
    </location>
</feature>
<feature type="modified residue" description="N6-acetyllysine" evidence="1">
    <location>
        <position position="335"/>
    </location>
</feature>
<feature type="modified residue" description="N6-succinyllysine" evidence="1">
    <location>
        <position position="343"/>
    </location>
</feature>
<feature type="modified residue" description="Phosphoserine" evidence="2">
    <location>
        <position position="481"/>
    </location>
</feature>
<feature type="modified residue" description="N6-succinyllysine" evidence="1">
    <location>
        <position position="595"/>
    </location>
</feature>
<feature type="modified residue" description="N6-acetyllysine" evidence="1">
    <location>
        <position position="602"/>
    </location>
</feature>
<reference key="1">
    <citation type="submission" date="2002-04" db="EMBL/GenBank/DDBJ databases">
        <title>Isolation and characterization of cDNA for macaque neurological disease genes.</title>
        <authorList>
            <person name="Kusuda J."/>
            <person name="Osada N."/>
            <person name="Hida M."/>
            <person name="Sugano S."/>
            <person name="Hashimoto K."/>
        </authorList>
    </citation>
    <scope>NUCLEOTIDE SEQUENCE [LARGE SCALE MRNA]</scope>
    <source>
        <tissue>Parietal cortex</tissue>
    </source>
</reference>
<comment type="function">
    <text evidence="2">Catalyzes the reversible isomerization of methylmalonyl-CoA (MMCoA) (generated from branched-chain amino acid metabolism and degradation of dietary odd chain fatty acids and cholesterol) to succinyl-CoA (3-carboxypropionyl-CoA), a key intermediate of the tricarboxylic acid cycle.</text>
</comment>
<comment type="catalytic activity">
    <reaction evidence="2">
        <text>(R)-methylmalonyl-CoA = succinyl-CoA</text>
        <dbReference type="Rhea" id="RHEA:22888"/>
        <dbReference type="ChEBI" id="CHEBI:57292"/>
        <dbReference type="ChEBI" id="CHEBI:57326"/>
        <dbReference type="EC" id="5.4.99.2"/>
    </reaction>
    <physiologicalReaction direction="left-to-right" evidence="2">
        <dbReference type="Rhea" id="RHEA:22889"/>
    </physiologicalReaction>
</comment>
<comment type="cofactor">
    <cofactor evidence="2">
        <name>adenosylcob(III)alamin</name>
        <dbReference type="ChEBI" id="CHEBI:18408"/>
    </cofactor>
</comment>
<comment type="activity regulation">
    <text evidence="2">Inhibited by itaconyl-CoA, a metabolite that inactivates the coenzyme B12 cofactor.</text>
</comment>
<comment type="subunit">
    <text evidence="2">Homodimer. Interacts (the apoenzyme form) with MMAA; the interaction is GTP dependent.</text>
</comment>
<comment type="subcellular location">
    <subcellularLocation>
        <location evidence="2">Mitochondrion matrix</location>
    </subcellularLocation>
    <subcellularLocation>
        <location evidence="2">Mitochondrion</location>
    </subcellularLocation>
    <subcellularLocation>
        <location evidence="2">Cytoplasm</location>
    </subcellularLocation>
</comment>
<comment type="similarity">
    <text evidence="5">Belongs to the methylmalonyl-CoA mutase family.</text>
</comment>
<name>MUTA_MACFA</name>
<dbReference type="EC" id="5.4.99.2" evidence="2"/>
<dbReference type="EMBL" id="AB083319">
    <property type="protein sequence ID" value="BAC20598.1"/>
    <property type="molecule type" value="mRNA"/>
</dbReference>
<dbReference type="RefSeq" id="NP_001306462.1">
    <property type="nucleotide sequence ID" value="NM_001319533.1"/>
</dbReference>
<dbReference type="SMR" id="Q8HXX1"/>
<dbReference type="STRING" id="9541.ENSMFAP00000040535"/>
<dbReference type="eggNOG" id="ENOG502QQ7X">
    <property type="taxonomic scope" value="Eukaryota"/>
</dbReference>
<dbReference type="Proteomes" id="UP000233100">
    <property type="component" value="Unplaced"/>
</dbReference>
<dbReference type="GO" id="GO:0005737">
    <property type="term" value="C:cytoplasm"/>
    <property type="evidence" value="ECO:0000250"/>
    <property type="project" value="UniProtKB"/>
</dbReference>
<dbReference type="GO" id="GO:0005759">
    <property type="term" value="C:mitochondrial matrix"/>
    <property type="evidence" value="ECO:0000250"/>
    <property type="project" value="UniProtKB"/>
</dbReference>
<dbReference type="GO" id="GO:0005739">
    <property type="term" value="C:mitochondrion"/>
    <property type="evidence" value="ECO:0000250"/>
    <property type="project" value="UniProtKB"/>
</dbReference>
<dbReference type="GO" id="GO:0031419">
    <property type="term" value="F:cobalamin binding"/>
    <property type="evidence" value="ECO:0000250"/>
    <property type="project" value="UniProtKB"/>
</dbReference>
<dbReference type="GO" id="GO:0003924">
    <property type="term" value="F:GTPase activity"/>
    <property type="evidence" value="ECO:0000250"/>
    <property type="project" value="UniProtKB"/>
</dbReference>
<dbReference type="GO" id="GO:0042802">
    <property type="term" value="F:identical protein binding"/>
    <property type="evidence" value="ECO:0000250"/>
    <property type="project" value="UniProtKB"/>
</dbReference>
<dbReference type="GO" id="GO:0046872">
    <property type="term" value="F:metal ion binding"/>
    <property type="evidence" value="ECO:0007669"/>
    <property type="project" value="UniProtKB-KW"/>
</dbReference>
<dbReference type="GO" id="GO:0004494">
    <property type="term" value="F:methylmalonyl-CoA mutase activity"/>
    <property type="evidence" value="ECO:0000250"/>
    <property type="project" value="UniProtKB"/>
</dbReference>
<dbReference type="GO" id="GO:0042803">
    <property type="term" value="F:protein homodimerization activity"/>
    <property type="evidence" value="ECO:0000250"/>
    <property type="project" value="UniProtKB"/>
</dbReference>
<dbReference type="GO" id="GO:0019678">
    <property type="term" value="P:propionate metabolic process, methylmalonyl pathway"/>
    <property type="evidence" value="ECO:0007669"/>
    <property type="project" value="TreeGrafter"/>
</dbReference>
<dbReference type="GO" id="GO:0006790">
    <property type="term" value="P:sulfur compound metabolic process"/>
    <property type="evidence" value="ECO:0007669"/>
    <property type="project" value="UniProtKB-ARBA"/>
</dbReference>
<dbReference type="CDD" id="cd02071">
    <property type="entry name" value="MM_CoA_mut_B12_BD"/>
    <property type="match status" value="1"/>
</dbReference>
<dbReference type="CDD" id="cd03679">
    <property type="entry name" value="MM_CoA_mutase_alpha_like"/>
    <property type="match status" value="1"/>
</dbReference>
<dbReference type="FunFam" id="3.20.20.240:FF:000002">
    <property type="entry name" value="Methylmalonyl-CoA mutase, mitochondrial"/>
    <property type="match status" value="1"/>
</dbReference>
<dbReference type="FunFam" id="3.40.50.280:FF:000002">
    <property type="entry name" value="Methylmalonyl-CoA mutase, mitochondrial"/>
    <property type="match status" value="1"/>
</dbReference>
<dbReference type="Gene3D" id="3.40.50.280">
    <property type="entry name" value="Cobalamin-binding domain"/>
    <property type="match status" value="1"/>
</dbReference>
<dbReference type="Gene3D" id="3.20.20.240">
    <property type="entry name" value="Methylmalonyl-CoA mutase"/>
    <property type="match status" value="1"/>
</dbReference>
<dbReference type="InterPro" id="IPR006159">
    <property type="entry name" value="Acid_CoA_mut_C"/>
</dbReference>
<dbReference type="InterPro" id="IPR016176">
    <property type="entry name" value="Cbl-dep_enz_cat"/>
</dbReference>
<dbReference type="InterPro" id="IPR006158">
    <property type="entry name" value="Cobalamin-bd"/>
</dbReference>
<dbReference type="InterPro" id="IPR036724">
    <property type="entry name" value="Cobalamin-bd_sf"/>
</dbReference>
<dbReference type="InterPro" id="IPR006099">
    <property type="entry name" value="MeMalonylCoA_mutase_a/b_cat"/>
</dbReference>
<dbReference type="InterPro" id="IPR006098">
    <property type="entry name" value="MMCoA_mutase_a_cat"/>
</dbReference>
<dbReference type="NCBIfam" id="TIGR00640">
    <property type="entry name" value="acid_CoA_mut_C"/>
    <property type="match status" value="1"/>
</dbReference>
<dbReference type="NCBIfam" id="TIGR00641">
    <property type="entry name" value="acid_CoA_mut_N"/>
    <property type="match status" value="1"/>
</dbReference>
<dbReference type="NCBIfam" id="NF006944">
    <property type="entry name" value="PRK09426.1"/>
    <property type="match status" value="1"/>
</dbReference>
<dbReference type="PANTHER" id="PTHR48101:SF4">
    <property type="entry name" value="METHYLMALONYL-COA MUTASE, MITOCHONDRIAL"/>
    <property type="match status" value="1"/>
</dbReference>
<dbReference type="PANTHER" id="PTHR48101">
    <property type="entry name" value="METHYLMALONYL-COA MUTASE, MITOCHONDRIAL-RELATED"/>
    <property type="match status" value="1"/>
</dbReference>
<dbReference type="Pfam" id="PF02310">
    <property type="entry name" value="B12-binding"/>
    <property type="match status" value="1"/>
</dbReference>
<dbReference type="Pfam" id="PF01642">
    <property type="entry name" value="MM_CoA_mutase"/>
    <property type="match status" value="1"/>
</dbReference>
<dbReference type="SUPFAM" id="SSF52242">
    <property type="entry name" value="Cobalamin (vitamin B12)-binding domain"/>
    <property type="match status" value="1"/>
</dbReference>
<dbReference type="SUPFAM" id="SSF51703">
    <property type="entry name" value="Cobalamin (vitamin B12)-dependent enzymes"/>
    <property type="match status" value="1"/>
</dbReference>
<dbReference type="PROSITE" id="PS51332">
    <property type="entry name" value="B12_BINDING"/>
    <property type="match status" value="1"/>
</dbReference>
<dbReference type="PROSITE" id="PS00544">
    <property type="entry name" value="METMALONYL_COA_MUTASE"/>
    <property type="match status" value="1"/>
</dbReference>
<evidence type="ECO:0000250" key="1">
    <source>
        <dbReference type="UniProtKB" id="P16332"/>
    </source>
</evidence>
<evidence type="ECO:0000250" key="2">
    <source>
        <dbReference type="UniProtKB" id="P22033"/>
    </source>
</evidence>
<evidence type="ECO:0000255" key="3"/>
<evidence type="ECO:0000255" key="4">
    <source>
        <dbReference type="PROSITE-ProRule" id="PRU00666"/>
    </source>
</evidence>
<evidence type="ECO:0000305" key="5"/>
<keyword id="KW-0007">Acetylation</keyword>
<keyword id="KW-0846">Cobalamin</keyword>
<keyword id="KW-0170">Cobalt</keyword>
<keyword id="KW-0963">Cytoplasm</keyword>
<keyword id="KW-0413">Isomerase</keyword>
<keyword id="KW-0479">Metal-binding</keyword>
<keyword id="KW-0496">Mitochondrion</keyword>
<keyword id="KW-0597">Phosphoprotein</keyword>
<keyword id="KW-1185">Reference proteome</keyword>
<keyword id="KW-0809">Transit peptide</keyword>
<proteinExistence type="evidence at transcript level"/>
<sequence>MLRVKNQLFLLSPHYLKQVKESSGSRLIRQRFLHQQQPLHPEWAALAKRQLKGKNPEDLIWHTPEGISIKPLYSKRDTTDLPEELPGVKPFTRGPYPTMYTFRPWTIRQYAGFSTVEESNKFYKDNIKAGQQGLSVAFDLATHRGYDSDNPRVRGDVGMAGVAIDTVEDTKILFDGIPLEKMSVSMTMNGAVIPVLANFIVTGEEQGVPKEKLTGTIQNDILKEFMVRNTYIFPPEPSMKIIADIFQYTSKHMPKFNSISISGYHMQEAGADAILELAYTLADGLEYSRTGLQAGLTIDEFAPRLSFFWGIGMNFYMEIAKMRAGRRLWAHLIEKMFQPKSSKSLLLRAHCQTSGWSLTEQDPYNNIVRTAIEAMAAVFGGTQSLHTNSFDEALGLPTVKSARIARNTQIIIQEESGIPKVADPWGGSYMMESLTNDVYDAALKLINEIEEMGGMAKAVAEGIPKLRIEECAARRQARIDSGSEVIVGVNKYQLEKEDAVEVLAIDNTSVRNRQIEKLQKIKSSRDQALAERCLAALTECAASGDGNILALAVDASRARCTVGEITDALKKVFGEHKANDRMVSGAYRQEFGESKEITSAIKRVHKFMEREGRRPRLLVAKMGQDGHDRGAKVIATGFADLGFDVDIGPLFQTPREVAQQAVDADVHAVGVSTLAAGHKTLVPELIKELNSLGRPDILVMCGGVIPPQDYEFLFEVGVSNVFGPGTRIPKAAVQVLDDIEKCLEKKQQSV</sequence>
<organism>
    <name type="scientific">Macaca fascicularis</name>
    <name type="common">Crab-eating macaque</name>
    <name type="synonym">Cynomolgus monkey</name>
    <dbReference type="NCBI Taxonomy" id="9541"/>
    <lineage>
        <taxon>Eukaryota</taxon>
        <taxon>Metazoa</taxon>
        <taxon>Chordata</taxon>
        <taxon>Craniata</taxon>
        <taxon>Vertebrata</taxon>
        <taxon>Euteleostomi</taxon>
        <taxon>Mammalia</taxon>
        <taxon>Eutheria</taxon>
        <taxon>Euarchontoglires</taxon>
        <taxon>Primates</taxon>
        <taxon>Haplorrhini</taxon>
        <taxon>Catarrhini</taxon>
        <taxon>Cercopithecidae</taxon>
        <taxon>Cercopithecinae</taxon>
        <taxon>Macaca</taxon>
    </lineage>
</organism>
<protein>
    <recommendedName>
        <fullName>Methylmalonyl-CoA mutase, mitochondrial</fullName>
        <shortName>MCM</shortName>
        <ecNumber evidence="2">5.4.99.2</ecNumber>
    </recommendedName>
    <alternativeName>
        <fullName>Methylmalonyl-CoA isomerase</fullName>
    </alternativeName>
</protein>